<comment type="function">
    <text>Chelates cobalt to the cobalamin precursor as part of the anaerobic pathway to cobalamin biosynthesis.</text>
</comment>
<comment type="catalytic activity">
    <reaction>
        <text>Co-sirohydrochlorin + 2 H(+) = sirohydrochlorin + Co(2+)</text>
        <dbReference type="Rhea" id="RHEA:15893"/>
        <dbReference type="ChEBI" id="CHEBI:15378"/>
        <dbReference type="ChEBI" id="CHEBI:48828"/>
        <dbReference type="ChEBI" id="CHEBI:58351"/>
        <dbReference type="ChEBI" id="CHEBI:60049"/>
        <dbReference type="EC" id="4.99.1.3"/>
    </reaction>
</comment>
<comment type="cofactor">
    <cofactor evidence="3">
        <name>[4Fe-4S] cluster</name>
        <dbReference type="ChEBI" id="CHEBI:49883"/>
    </cofactor>
    <text evidence="3">Binds 1 [4Fe-4S] cluster per dimer.</text>
</comment>
<comment type="pathway">
    <text>Cofactor biosynthesis; adenosylcobalamin biosynthesis; cob(II)yrinate a,c-diamide from sirohydrochlorin (anaerobic route): step 1/10.</text>
</comment>
<comment type="subunit">
    <text evidence="3">Homodimer.</text>
</comment>
<comment type="similarity">
    <text evidence="3">Belongs to the CbiX family. CbiXL subfamily.</text>
</comment>
<name>CBIX_PRIMG</name>
<dbReference type="EC" id="4.99.1.3"/>
<dbReference type="EMBL" id="AJ000758">
    <property type="protein sequence ID" value="CAA04308.1"/>
    <property type="molecule type" value="Genomic_DNA"/>
</dbReference>
<dbReference type="PIR" id="T44684">
    <property type="entry name" value="T44684"/>
</dbReference>
<dbReference type="SMR" id="O87690"/>
<dbReference type="BioCyc" id="MetaCyc:MONOMER-14879"/>
<dbReference type="UniPathway" id="UPA00148">
    <property type="reaction ID" value="UER00223"/>
</dbReference>
<dbReference type="GO" id="GO:0051539">
    <property type="term" value="F:4 iron, 4 sulfur cluster binding"/>
    <property type="evidence" value="ECO:0007669"/>
    <property type="project" value="UniProtKB-KW"/>
</dbReference>
<dbReference type="GO" id="GO:0046872">
    <property type="term" value="F:metal ion binding"/>
    <property type="evidence" value="ECO:0007669"/>
    <property type="project" value="UniProtKB-KW"/>
</dbReference>
<dbReference type="GO" id="GO:0016852">
    <property type="term" value="F:sirohydrochlorin cobaltochelatase activity"/>
    <property type="evidence" value="ECO:0007669"/>
    <property type="project" value="UniProtKB-EC"/>
</dbReference>
<dbReference type="GO" id="GO:0009236">
    <property type="term" value="P:cobalamin biosynthetic process"/>
    <property type="evidence" value="ECO:0007669"/>
    <property type="project" value="UniProtKB-UniPathway"/>
</dbReference>
<dbReference type="CDD" id="cd03414">
    <property type="entry name" value="CbiX_SirB_C"/>
    <property type="match status" value="1"/>
</dbReference>
<dbReference type="CDD" id="cd03416">
    <property type="entry name" value="CbiX_SirB_N"/>
    <property type="match status" value="1"/>
</dbReference>
<dbReference type="Gene3D" id="3.40.50.1400">
    <property type="match status" value="2"/>
</dbReference>
<dbReference type="InterPro" id="IPR002762">
    <property type="entry name" value="CbiX-like"/>
</dbReference>
<dbReference type="InterPro" id="IPR050963">
    <property type="entry name" value="Sirohydro_Cobaltochel/CbiX"/>
</dbReference>
<dbReference type="PANTHER" id="PTHR33542">
    <property type="entry name" value="SIROHYDROCHLORIN FERROCHELATASE, CHLOROPLASTIC"/>
    <property type="match status" value="1"/>
</dbReference>
<dbReference type="PANTHER" id="PTHR33542:SF3">
    <property type="entry name" value="SIROHYDROCHLORIN FERROCHELATASE, CHLOROPLASTIC"/>
    <property type="match status" value="1"/>
</dbReference>
<dbReference type="Pfam" id="PF01903">
    <property type="entry name" value="CbiX"/>
    <property type="match status" value="2"/>
</dbReference>
<dbReference type="SUPFAM" id="SSF53800">
    <property type="entry name" value="Chelatase"/>
    <property type="match status" value="1"/>
</dbReference>
<keyword id="KW-0004">4Fe-4S</keyword>
<keyword id="KW-0169">Cobalamin biosynthesis</keyword>
<keyword id="KW-0170">Cobalt</keyword>
<keyword id="KW-0408">Iron</keyword>
<keyword id="KW-0411">Iron-sulfur</keyword>
<keyword id="KW-0456">Lyase</keyword>
<keyword id="KW-0479">Metal-binding</keyword>
<sequence length="306" mass="34882">MGGHYMKSVLFVGHGSRDPEGNDREFISTMKHDWDASILVETCFLEFERPNVSQGIDTCVAKGAQDVVVIPIMLLPAGHSKIHIPAAIDEAKEKYPHVNFVYGRPIGVHEEALEILKTRLQESGENLETPAEDTAVIVLGRGGSDPDANSDLYKITRLLWEKTNYKIVETSFMGVTAPLIDEGVERCLKLGAKKVVILPYFLFTGVLIKRLEEMVKQYKMQHENIEFKLAGYFGFHPKLQTILKERAEEGLEGEVKMNCDTCQYRLGIMEHIDHHHHHDHDHDHDHGHHHHDHHHDHHEDKVGELK</sequence>
<evidence type="ECO:0000250" key="1"/>
<evidence type="ECO:0000256" key="2">
    <source>
        <dbReference type="SAM" id="MobiDB-lite"/>
    </source>
</evidence>
<evidence type="ECO:0000305" key="3"/>
<accession>O87690</accession>
<reference key="1">
    <citation type="journal article" date="1998" name="Biochem. J.">
        <title>Cobalamin (vitamin B12) biosynthesis: identification and characterization of a Bacillus megaterium cobI operon.</title>
        <authorList>
            <person name="Raux E."/>
            <person name="Lanois A."/>
            <person name="Warren M.J."/>
            <person name="Rambach A."/>
            <person name="Thermes C."/>
        </authorList>
    </citation>
    <scope>NUCLEOTIDE SEQUENCE [GENOMIC DNA]</scope>
    <source>
        <strain>DSM 509 / CCM 1464 / NBRC 12109</strain>
    </source>
</reference>
<reference key="2">
    <citation type="journal article" date="2003" name="Biochem. J.">
        <title>Identification and functional analysis of enzymes required for precorrin-2 dehydrogenation and metal ion insertion in the biosynthesis of sirohaem and cobalamin in Bacillus megaterium.</title>
        <authorList>
            <person name="Raux E."/>
            <person name="Leech H.K."/>
            <person name="Beck R."/>
            <person name="Schubert H.L."/>
            <person name="Santander P.J."/>
            <person name="Roessner C.A."/>
            <person name="Scott A.I."/>
            <person name="Martens J.H."/>
            <person name="Jahn D."/>
            <person name="Thermes C."/>
            <person name="Rambach A."/>
            <person name="Warren M.J."/>
        </authorList>
    </citation>
    <scope>CHARACTERIZATION</scope>
    <source>
        <strain>DSM 509 / CCM 1464 / NBRC 12109</strain>
    </source>
</reference>
<reference key="3">
    <citation type="journal article" date="2003" name="J. Biol. Chem.">
        <title>Characterization of the cobaltochelatase CbiXL: evidence for a 4Fe-4S center housed within an MXCXXC motif.</title>
        <authorList>
            <person name="Leech H.K."/>
            <person name="Raux E."/>
            <person name="McLean K.J."/>
            <person name="Munro A.W."/>
            <person name="Robinson N.J."/>
            <person name="Borrelly G.P.M."/>
            <person name="Malten M."/>
            <person name="Jahn D."/>
            <person name="Rigby S.E.J."/>
            <person name="Heathcote P."/>
            <person name="Warren M.J."/>
        </authorList>
    </citation>
    <scope>CHARACTERIZATION OF IRON-SULFUR CLUSTER</scope>
</reference>
<organism>
    <name type="scientific">Priestia megaterium</name>
    <name type="common">Bacillus megaterium</name>
    <dbReference type="NCBI Taxonomy" id="1404"/>
    <lineage>
        <taxon>Bacteria</taxon>
        <taxon>Bacillati</taxon>
        <taxon>Bacillota</taxon>
        <taxon>Bacilli</taxon>
        <taxon>Bacillales</taxon>
        <taxon>Bacillaceae</taxon>
        <taxon>Priestia</taxon>
    </lineage>
</organism>
<feature type="chain" id="PRO_0000150351" description="Sirohydrochlorin cobaltochelatase">
    <location>
        <begin position="1"/>
        <end position="306"/>
    </location>
</feature>
<feature type="region of interest" description="Disordered" evidence="2">
    <location>
        <begin position="276"/>
        <end position="306"/>
    </location>
</feature>
<feature type="compositionally biased region" description="Basic residues" evidence="2">
    <location>
        <begin position="287"/>
        <end position="296"/>
    </location>
</feature>
<feature type="compositionally biased region" description="Basic and acidic residues" evidence="2">
    <location>
        <begin position="297"/>
        <end position="306"/>
    </location>
</feature>
<feature type="binding site" evidence="1">
    <location>
        <position position="14"/>
    </location>
    <ligand>
        <name>Co(2+)</name>
        <dbReference type="ChEBI" id="CHEBI:48828"/>
    </ligand>
</feature>
<feature type="binding site" evidence="1">
    <location>
        <position position="79"/>
    </location>
    <ligand>
        <name>Co(2+)</name>
        <dbReference type="ChEBI" id="CHEBI:48828"/>
    </ligand>
</feature>
<feature type="binding site" evidence="3">
    <location>
        <position position="259"/>
    </location>
    <ligand>
        <name>[4Fe-4S] cluster</name>
        <dbReference type="ChEBI" id="CHEBI:49883"/>
        <note>ligand shared between dimeric partners</note>
    </ligand>
</feature>
<feature type="binding site" evidence="3">
    <location>
        <position position="262"/>
    </location>
    <ligand>
        <name>[4Fe-4S] cluster</name>
        <dbReference type="ChEBI" id="CHEBI:49883"/>
        <note>ligand shared between dimeric partners</note>
    </ligand>
</feature>
<proteinExistence type="evidence at protein level"/>
<protein>
    <recommendedName>
        <fullName>Sirohydrochlorin cobaltochelatase</fullName>
        <ecNumber>4.99.1.3</ecNumber>
    </recommendedName>
    <alternativeName>
        <fullName>CbiXL</fullName>
    </alternativeName>
</protein>
<gene>
    <name type="primary">cbiX</name>
</gene>